<comment type="function">
    <molecule>Soluble FNDC4</molecule>
    <text evidence="1">Has anti-inflammatory properties. In the colon, acts on macrophages to down-regulate inflammation. May suppress osteoclastogenesis and mature osteoclast resorptive function. In white adipose tissue, decreases local inflammation, via interaction with GPR116. Also required for proper systemic glucose tolerance, specifically sensitizing white adipocytes to insulin and promoting glucose uptake. The insulin sensitizing function in adipose tissue is mediated by interaction with ADGRF5/GPR116 and activation of cAMP signaling.</text>
</comment>
<comment type="subcellular location">
    <molecule>Fibronectin type III domain-containing protein 4</molecule>
    <subcellularLocation>
        <location evidence="7">Membrane</location>
        <topology evidence="7">Single-pass type I membrane protein</topology>
    </subcellularLocation>
</comment>
<comment type="subcellular location">
    <molecule>Soluble FNDC4</molecule>
    <subcellularLocation>
        <location evidence="1">Secreted</location>
    </subcellularLocation>
</comment>
<comment type="tissue specificity">
    <text evidence="6">Highly expressed in the liver and the brain, including in the cortex, hypothalamus and hippocampus (PubMed:34016966). Also expressed in adipose tissue (PubMed:34016966).</text>
</comment>
<comment type="induction">
    <text evidence="5">Up-regulated by inflammation in the intestine (PubMed:27066907). Up-regulated by TGFB1 in a colorectal adenocarcinoma cell line.</text>
</comment>
<keyword id="KW-0325">Glycoprotein</keyword>
<keyword id="KW-0472">Membrane</keyword>
<keyword id="KW-1267">Proteomics identification</keyword>
<keyword id="KW-1185">Reference proteome</keyword>
<keyword id="KW-0964">Secreted</keyword>
<keyword id="KW-0732">Signal</keyword>
<keyword id="KW-0812">Transmembrane</keyword>
<keyword id="KW-1133">Transmembrane helix</keyword>
<protein>
    <recommendedName>
        <fullName>Fibronectin type III domain-containing protein 4</fullName>
    </recommendedName>
    <alternativeName>
        <fullName>Fibronectin type III repeat-containing protein 1</fullName>
    </alternativeName>
    <component>
        <recommendedName>
            <fullName>Soluble FNDC4</fullName>
            <shortName>sFNDC4</shortName>
        </recommendedName>
    </component>
</protein>
<sequence>MPSGCHSSPPSGLRGDMASLVPLSPYLSPTVLLLVSCDLGFVRADRPPSPVNVTVTHLRANSATVSWDVPEGNIVIGYSISQQRQNGPGQRVIREVNTTTRACALWGLAEDSDYTVQVRSIGLRGESPPGPRVHFRTLKGSDRLPSNSSSPGDITVEGLDGERPLQTGEVVIIVVVLLMWAAVIGLFCRQYDIIKDNDSNNNPKEKGKGPEQSPQGRPVGTRQKKSPSINTIDV</sequence>
<proteinExistence type="evidence at protein level"/>
<reference key="1">
    <citation type="journal article" date="2004" name="Nat. Genet.">
        <title>Complete sequencing and characterization of 21,243 full-length human cDNAs.</title>
        <authorList>
            <person name="Ota T."/>
            <person name="Suzuki Y."/>
            <person name="Nishikawa T."/>
            <person name="Otsuki T."/>
            <person name="Sugiyama T."/>
            <person name="Irie R."/>
            <person name="Wakamatsu A."/>
            <person name="Hayashi K."/>
            <person name="Sato H."/>
            <person name="Nagai K."/>
            <person name="Kimura K."/>
            <person name="Makita H."/>
            <person name="Sekine M."/>
            <person name="Obayashi M."/>
            <person name="Nishi T."/>
            <person name="Shibahara T."/>
            <person name="Tanaka T."/>
            <person name="Ishii S."/>
            <person name="Yamamoto J."/>
            <person name="Saito K."/>
            <person name="Kawai Y."/>
            <person name="Isono Y."/>
            <person name="Nakamura Y."/>
            <person name="Nagahari K."/>
            <person name="Murakami K."/>
            <person name="Yasuda T."/>
            <person name="Iwayanagi T."/>
            <person name="Wagatsuma M."/>
            <person name="Shiratori A."/>
            <person name="Sudo H."/>
            <person name="Hosoiri T."/>
            <person name="Kaku Y."/>
            <person name="Kodaira H."/>
            <person name="Kondo H."/>
            <person name="Sugawara M."/>
            <person name="Takahashi M."/>
            <person name="Kanda K."/>
            <person name="Yokoi T."/>
            <person name="Furuya T."/>
            <person name="Kikkawa E."/>
            <person name="Omura Y."/>
            <person name="Abe K."/>
            <person name="Kamihara K."/>
            <person name="Katsuta N."/>
            <person name="Sato K."/>
            <person name="Tanikawa M."/>
            <person name="Yamazaki M."/>
            <person name="Ninomiya K."/>
            <person name="Ishibashi T."/>
            <person name="Yamashita H."/>
            <person name="Murakawa K."/>
            <person name="Fujimori K."/>
            <person name="Tanai H."/>
            <person name="Kimata M."/>
            <person name="Watanabe M."/>
            <person name="Hiraoka S."/>
            <person name="Chiba Y."/>
            <person name="Ishida S."/>
            <person name="Ono Y."/>
            <person name="Takiguchi S."/>
            <person name="Watanabe S."/>
            <person name="Yosida M."/>
            <person name="Hotuta T."/>
            <person name="Kusano J."/>
            <person name="Kanehori K."/>
            <person name="Takahashi-Fujii A."/>
            <person name="Hara H."/>
            <person name="Tanase T.-O."/>
            <person name="Nomura Y."/>
            <person name="Togiya S."/>
            <person name="Komai F."/>
            <person name="Hara R."/>
            <person name="Takeuchi K."/>
            <person name="Arita M."/>
            <person name="Imose N."/>
            <person name="Musashino K."/>
            <person name="Yuuki H."/>
            <person name="Oshima A."/>
            <person name="Sasaki N."/>
            <person name="Aotsuka S."/>
            <person name="Yoshikawa Y."/>
            <person name="Matsunawa H."/>
            <person name="Ichihara T."/>
            <person name="Shiohata N."/>
            <person name="Sano S."/>
            <person name="Moriya S."/>
            <person name="Momiyama H."/>
            <person name="Satoh N."/>
            <person name="Takami S."/>
            <person name="Terashima Y."/>
            <person name="Suzuki O."/>
            <person name="Nakagawa S."/>
            <person name="Senoh A."/>
            <person name="Mizoguchi H."/>
            <person name="Goto Y."/>
            <person name="Shimizu F."/>
            <person name="Wakebe H."/>
            <person name="Hishigaki H."/>
            <person name="Watanabe T."/>
            <person name="Sugiyama A."/>
            <person name="Takemoto M."/>
            <person name="Kawakami B."/>
            <person name="Yamazaki M."/>
            <person name="Watanabe K."/>
            <person name="Kumagai A."/>
            <person name="Itakura S."/>
            <person name="Fukuzumi Y."/>
            <person name="Fujimori Y."/>
            <person name="Komiyama M."/>
            <person name="Tashiro H."/>
            <person name="Tanigami A."/>
            <person name="Fujiwara T."/>
            <person name="Ono T."/>
            <person name="Yamada K."/>
            <person name="Fujii Y."/>
            <person name="Ozaki K."/>
            <person name="Hirao M."/>
            <person name="Ohmori Y."/>
            <person name="Kawabata A."/>
            <person name="Hikiji T."/>
            <person name="Kobatake N."/>
            <person name="Inagaki H."/>
            <person name="Ikema Y."/>
            <person name="Okamoto S."/>
            <person name="Okitani R."/>
            <person name="Kawakami T."/>
            <person name="Noguchi S."/>
            <person name="Itoh T."/>
            <person name="Shigeta K."/>
            <person name="Senba T."/>
            <person name="Matsumura K."/>
            <person name="Nakajima Y."/>
            <person name="Mizuno T."/>
            <person name="Morinaga M."/>
            <person name="Sasaki M."/>
            <person name="Togashi T."/>
            <person name="Oyama M."/>
            <person name="Hata H."/>
            <person name="Watanabe M."/>
            <person name="Komatsu T."/>
            <person name="Mizushima-Sugano J."/>
            <person name="Satoh T."/>
            <person name="Shirai Y."/>
            <person name="Takahashi Y."/>
            <person name="Nakagawa K."/>
            <person name="Okumura K."/>
            <person name="Nagase T."/>
            <person name="Nomura N."/>
            <person name="Kikuchi H."/>
            <person name="Masuho Y."/>
            <person name="Yamashita R."/>
            <person name="Nakai K."/>
            <person name="Yada T."/>
            <person name="Nakamura Y."/>
            <person name="Ohara O."/>
            <person name="Isogai T."/>
            <person name="Sugano S."/>
        </authorList>
    </citation>
    <scope>NUCLEOTIDE SEQUENCE [LARGE SCALE MRNA]</scope>
</reference>
<reference key="2">
    <citation type="journal article" date="2003" name="Genome Res.">
        <title>The secreted protein discovery initiative (SPDI), a large-scale effort to identify novel human secreted and transmembrane proteins: a bioinformatics assessment.</title>
        <authorList>
            <person name="Clark H.F."/>
            <person name="Gurney A.L."/>
            <person name="Abaya E."/>
            <person name="Baker K."/>
            <person name="Baldwin D.T."/>
            <person name="Brush J."/>
            <person name="Chen J."/>
            <person name="Chow B."/>
            <person name="Chui C."/>
            <person name="Crowley C."/>
            <person name="Currell B."/>
            <person name="Deuel B."/>
            <person name="Dowd P."/>
            <person name="Eaton D."/>
            <person name="Foster J.S."/>
            <person name="Grimaldi C."/>
            <person name="Gu Q."/>
            <person name="Hass P.E."/>
            <person name="Heldens S."/>
            <person name="Huang A."/>
            <person name="Kim H.S."/>
            <person name="Klimowski L."/>
            <person name="Jin Y."/>
            <person name="Johnson S."/>
            <person name="Lee J."/>
            <person name="Lewis L."/>
            <person name="Liao D."/>
            <person name="Mark M.R."/>
            <person name="Robbie E."/>
            <person name="Sanchez C."/>
            <person name="Schoenfeld J."/>
            <person name="Seshagiri S."/>
            <person name="Simmons L."/>
            <person name="Singh J."/>
            <person name="Smith V."/>
            <person name="Stinson J."/>
            <person name="Vagts A."/>
            <person name="Vandlen R.L."/>
            <person name="Watanabe C."/>
            <person name="Wieand D."/>
            <person name="Woods K."/>
            <person name="Xie M.-H."/>
            <person name="Yansura D.G."/>
            <person name="Yi S."/>
            <person name="Yu G."/>
            <person name="Yuan J."/>
            <person name="Zhang M."/>
            <person name="Zhang Z."/>
            <person name="Goddard A.D."/>
            <person name="Wood W.I."/>
            <person name="Godowski P.J."/>
            <person name="Gray A.M."/>
        </authorList>
    </citation>
    <scope>NUCLEOTIDE SEQUENCE [LARGE SCALE MRNA]</scope>
</reference>
<reference key="3">
    <citation type="journal article" date="2005" name="Nature">
        <title>Generation and annotation of the DNA sequences of human chromosomes 2 and 4.</title>
        <authorList>
            <person name="Hillier L.W."/>
            <person name="Graves T.A."/>
            <person name="Fulton R.S."/>
            <person name="Fulton L.A."/>
            <person name="Pepin K.H."/>
            <person name="Minx P."/>
            <person name="Wagner-McPherson C."/>
            <person name="Layman D."/>
            <person name="Wylie K."/>
            <person name="Sekhon M."/>
            <person name="Becker M.C."/>
            <person name="Fewell G.A."/>
            <person name="Delehaunty K.D."/>
            <person name="Miner T.L."/>
            <person name="Nash W.E."/>
            <person name="Kremitzki C."/>
            <person name="Oddy L."/>
            <person name="Du H."/>
            <person name="Sun H."/>
            <person name="Bradshaw-Cordum H."/>
            <person name="Ali J."/>
            <person name="Carter J."/>
            <person name="Cordes M."/>
            <person name="Harris A."/>
            <person name="Isak A."/>
            <person name="van Brunt A."/>
            <person name="Nguyen C."/>
            <person name="Du F."/>
            <person name="Courtney L."/>
            <person name="Kalicki J."/>
            <person name="Ozersky P."/>
            <person name="Abbott S."/>
            <person name="Armstrong J."/>
            <person name="Belter E.A."/>
            <person name="Caruso L."/>
            <person name="Cedroni M."/>
            <person name="Cotton M."/>
            <person name="Davidson T."/>
            <person name="Desai A."/>
            <person name="Elliott G."/>
            <person name="Erb T."/>
            <person name="Fronick C."/>
            <person name="Gaige T."/>
            <person name="Haakenson W."/>
            <person name="Haglund K."/>
            <person name="Holmes A."/>
            <person name="Harkins R."/>
            <person name="Kim K."/>
            <person name="Kruchowski S.S."/>
            <person name="Strong C.M."/>
            <person name="Grewal N."/>
            <person name="Goyea E."/>
            <person name="Hou S."/>
            <person name="Levy A."/>
            <person name="Martinka S."/>
            <person name="Mead K."/>
            <person name="McLellan M.D."/>
            <person name="Meyer R."/>
            <person name="Randall-Maher J."/>
            <person name="Tomlinson C."/>
            <person name="Dauphin-Kohlberg S."/>
            <person name="Kozlowicz-Reilly A."/>
            <person name="Shah N."/>
            <person name="Swearengen-Shahid S."/>
            <person name="Snider J."/>
            <person name="Strong J.T."/>
            <person name="Thompson J."/>
            <person name="Yoakum M."/>
            <person name="Leonard S."/>
            <person name="Pearman C."/>
            <person name="Trani L."/>
            <person name="Radionenko M."/>
            <person name="Waligorski J.E."/>
            <person name="Wang C."/>
            <person name="Rock S.M."/>
            <person name="Tin-Wollam A.-M."/>
            <person name="Maupin R."/>
            <person name="Latreille P."/>
            <person name="Wendl M.C."/>
            <person name="Yang S.-P."/>
            <person name="Pohl C."/>
            <person name="Wallis J.W."/>
            <person name="Spieth J."/>
            <person name="Bieri T.A."/>
            <person name="Berkowicz N."/>
            <person name="Nelson J.O."/>
            <person name="Osborne J."/>
            <person name="Ding L."/>
            <person name="Meyer R."/>
            <person name="Sabo A."/>
            <person name="Shotland Y."/>
            <person name="Sinha P."/>
            <person name="Wohldmann P.E."/>
            <person name="Cook L.L."/>
            <person name="Hickenbotham M.T."/>
            <person name="Eldred J."/>
            <person name="Williams D."/>
            <person name="Jones T.A."/>
            <person name="She X."/>
            <person name="Ciccarelli F.D."/>
            <person name="Izaurralde E."/>
            <person name="Taylor J."/>
            <person name="Schmutz J."/>
            <person name="Myers R.M."/>
            <person name="Cox D.R."/>
            <person name="Huang X."/>
            <person name="McPherson J.D."/>
            <person name="Mardis E.R."/>
            <person name="Clifton S.W."/>
            <person name="Warren W.C."/>
            <person name="Chinwalla A.T."/>
            <person name="Eddy S.R."/>
            <person name="Marra M.A."/>
            <person name="Ovcharenko I."/>
            <person name="Furey T.S."/>
            <person name="Miller W."/>
            <person name="Eichler E.E."/>
            <person name="Bork P."/>
            <person name="Suyama M."/>
            <person name="Torrents D."/>
            <person name="Waterston R.H."/>
            <person name="Wilson R.K."/>
        </authorList>
    </citation>
    <scope>NUCLEOTIDE SEQUENCE [LARGE SCALE GENOMIC DNA]</scope>
</reference>
<reference key="4">
    <citation type="submission" date="2005-09" db="EMBL/GenBank/DDBJ databases">
        <authorList>
            <person name="Mural R.J."/>
            <person name="Istrail S."/>
            <person name="Sutton G.G."/>
            <person name="Florea L."/>
            <person name="Halpern A.L."/>
            <person name="Mobarry C.M."/>
            <person name="Lippert R."/>
            <person name="Walenz B."/>
            <person name="Shatkay H."/>
            <person name="Dew I."/>
            <person name="Miller J.R."/>
            <person name="Flanigan M.J."/>
            <person name="Edwards N.J."/>
            <person name="Bolanos R."/>
            <person name="Fasulo D."/>
            <person name="Halldorsson B.V."/>
            <person name="Hannenhalli S."/>
            <person name="Turner R."/>
            <person name="Yooseph S."/>
            <person name="Lu F."/>
            <person name="Nusskern D.R."/>
            <person name="Shue B.C."/>
            <person name="Zheng X.H."/>
            <person name="Zhong F."/>
            <person name="Delcher A.L."/>
            <person name="Huson D.H."/>
            <person name="Kravitz S.A."/>
            <person name="Mouchard L."/>
            <person name="Reinert K."/>
            <person name="Remington K.A."/>
            <person name="Clark A.G."/>
            <person name="Waterman M.S."/>
            <person name="Eichler E.E."/>
            <person name="Adams M.D."/>
            <person name="Hunkapiller M.W."/>
            <person name="Myers E.W."/>
            <person name="Venter J.C."/>
        </authorList>
    </citation>
    <scope>NUCLEOTIDE SEQUENCE [LARGE SCALE GENOMIC DNA]</scope>
</reference>
<reference key="5">
    <citation type="journal article" date="2004" name="Genome Res.">
        <title>The status, quality, and expansion of the NIH full-length cDNA project: the Mammalian Gene Collection (MGC).</title>
        <authorList>
            <consortium name="The MGC Project Team"/>
        </authorList>
    </citation>
    <scope>NUCLEOTIDE SEQUENCE [LARGE SCALE MRNA]</scope>
    <source>
        <tissue>Uterus</tissue>
    </source>
</reference>
<reference key="6">
    <citation type="journal article" date="2016" name="Nat. Commun.">
        <title>FNDC4 acts as an anti-inflammatory factor on macrophages and improves colitis in mice.</title>
        <authorList>
            <person name="Bosma M."/>
            <person name="Gerling M."/>
            <person name="Pasto J."/>
            <person name="Georgiadi A."/>
            <person name="Graham E."/>
            <person name="Shilkova O."/>
            <person name="Iwata Y."/>
            <person name="Almer S."/>
            <person name="Soederman J."/>
            <person name="Toftgaard R."/>
            <person name="Wermeling F."/>
            <person name="Bostroem E.A."/>
            <person name="Bostroem P.A."/>
        </authorList>
    </citation>
    <scope>FUNCTION</scope>
    <scope>INDUCTION</scope>
</reference>
<reference key="7">
    <citation type="journal article" date="2021" name="Nat. Commun.">
        <title>Orphan GPR116 mediates the insulin sensitizing effects of the hepatokine FNDC4 in adipose tissue.</title>
        <authorList>
            <person name="Georgiadi A."/>
            <person name="Lopez-Salazar V."/>
            <person name="Merahbi R.E."/>
            <person name="Karikari R.A."/>
            <person name="Ma X."/>
            <person name="Mourao A."/>
            <person name="Klepac K."/>
            <person name="Buehler L."/>
            <person name="Alfaro A.J."/>
            <person name="Kaczmarek I."/>
            <person name="Linford A."/>
            <person name="Bosma M."/>
            <person name="Shilkova O."/>
            <person name="Ritvos O."/>
            <person name="Nakamura N."/>
            <person name="Hirose S."/>
            <person name="Lassi M."/>
            <person name="Teperino R."/>
            <person name="Machado J."/>
            <person name="Scheideler M."/>
            <person name="Dietrich A."/>
            <person name="Geerlof A."/>
            <person name="Feuchtinger A."/>
            <person name="Blutke A."/>
            <person name="Fischer K."/>
            <person name="Mueller T.D."/>
            <person name="Kessler K."/>
            <person name="Schoeneberg T."/>
            <person name="Thor D."/>
            <person name="Hornemann S."/>
            <person name="Kruse M."/>
            <person name="Nawroth P."/>
            <person name="Pivovarova-Ramich O."/>
            <person name="Pfeiffer A.F.H."/>
            <person name="Sattler M."/>
            <person name="Blueher M."/>
            <person name="Herzig S."/>
        </authorList>
    </citation>
    <scope>TISSUE SPECIFICITY</scope>
</reference>
<feature type="signal peptide" evidence="2">
    <location>
        <begin position="1"/>
        <end position="44"/>
    </location>
</feature>
<feature type="chain" id="PRO_0000271379" description="Fibronectin type III domain-containing protein 4">
    <location>
        <begin position="45"/>
        <end position="234"/>
    </location>
</feature>
<feature type="chain" id="PRO_0000461429" description="Soluble FNDC4" evidence="1">
    <location>
        <begin position="45"/>
        <end status="unknown"/>
    </location>
</feature>
<feature type="topological domain" description="Extracellular" evidence="2">
    <location>
        <begin position="45"/>
        <end position="167"/>
    </location>
</feature>
<feature type="transmembrane region" description="Helical" evidence="2">
    <location>
        <begin position="168"/>
        <end position="188"/>
    </location>
</feature>
<feature type="topological domain" description="Cytoplasmic" evidence="2">
    <location>
        <begin position="189"/>
        <end position="234"/>
    </location>
</feature>
<feature type="domain" description="Fibronectin type-III" evidence="3">
    <location>
        <begin position="47"/>
        <end position="140"/>
    </location>
</feature>
<feature type="region of interest" description="Disordered" evidence="4">
    <location>
        <begin position="122"/>
        <end position="160"/>
    </location>
</feature>
<feature type="region of interest" description="Disordered" evidence="4">
    <location>
        <begin position="197"/>
        <end position="234"/>
    </location>
</feature>
<feature type="compositionally biased region" description="Basic and acidic residues" evidence="4">
    <location>
        <begin position="197"/>
        <end position="209"/>
    </location>
</feature>
<feature type="glycosylation site" description="N-linked (GlcNAc...) asparagine" evidence="2">
    <location>
        <position position="52"/>
    </location>
</feature>
<feature type="glycosylation site" description="N-linked (GlcNAc...) asparagine" evidence="2">
    <location>
        <position position="97"/>
    </location>
</feature>
<feature type="glycosylation site" description="N-linked (GlcNAc...) asparagine" evidence="2">
    <location>
        <position position="147"/>
    </location>
</feature>
<organism>
    <name type="scientific">Homo sapiens</name>
    <name type="common">Human</name>
    <dbReference type="NCBI Taxonomy" id="9606"/>
    <lineage>
        <taxon>Eukaryota</taxon>
        <taxon>Metazoa</taxon>
        <taxon>Chordata</taxon>
        <taxon>Craniata</taxon>
        <taxon>Vertebrata</taxon>
        <taxon>Euteleostomi</taxon>
        <taxon>Mammalia</taxon>
        <taxon>Eutheria</taxon>
        <taxon>Euarchontoglires</taxon>
        <taxon>Primates</taxon>
        <taxon>Haplorrhini</taxon>
        <taxon>Catarrhini</taxon>
        <taxon>Hominidae</taxon>
        <taxon>Homo</taxon>
    </lineage>
</organism>
<name>FNDC4_HUMAN</name>
<evidence type="ECO:0000250" key="1">
    <source>
        <dbReference type="UniProtKB" id="Q3TR08"/>
    </source>
</evidence>
<evidence type="ECO:0000255" key="2"/>
<evidence type="ECO:0000255" key="3">
    <source>
        <dbReference type="PROSITE-ProRule" id="PRU00316"/>
    </source>
</evidence>
<evidence type="ECO:0000256" key="4">
    <source>
        <dbReference type="SAM" id="MobiDB-lite"/>
    </source>
</evidence>
<evidence type="ECO:0000269" key="5">
    <source>
    </source>
</evidence>
<evidence type="ECO:0000269" key="6">
    <source>
    </source>
</evidence>
<evidence type="ECO:0000305" key="7"/>
<accession>Q9H6D8</accession>
<accession>D6W560</accession>
<dbReference type="EMBL" id="AK026015">
    <property type="protein sequence ID" value="BAB15321.1"/>
    <property type="molecule type" value="mRNA"/>
</dbReference>
<dbReference type="EMBL" id="AY358136">
    <property type="protein sequence ID" value="AAQ88503.1"/>
    <property type="molecule type" value="mRNA"/>
</dbReference>
<dbReference type="EMBL" id="AC074117">
    <property type="protein sequence ID" value="AAY14849.1"/>
    <property type="molecule type" value="Genomic_DNA"/>
</dbReference>
<dbReference type="EMBL" id="CH471053">
    <property type="protein sequence ID" value="EAX00569.1"/>
    <property type="molecule type" value="Genomic_DNA"/>
</dbReference>
<dbReference type="EMBL" id="CH471053">
    <property type="protein sequence ID" value="EAX00570.1"/>
    <property type="molecule type" value="Genomic_DNA"/>
</dbReference>
<dbReference type="EMBL" id="BC032725">
    <property type="protein sequence ID" value="AAH32725.1"/>
    <property type="molecule type" value="mRNA"/>
</dbReference>
<dbReference type="CCDS" id="CCDS1756.1"/>
<dbReference type="RefSeq" id="NP_073734.1">
    <property type="nucleotide sequence ID" value="NM_022823.3"/>
</dbReference>
<dbReference type="RefSeq" id="XP_047301427.1">
    <property type="nucleotide sequence ID" value="XM_047445471.1"/>
</dbReference>
<dbReference type="SMR" id="Q9H6D8"/>
<dbReference type="BioGRID" id="122314">
    <property type="interactions" value="29"/>
</dbReference>
<dbReference type="FunCoup" id="Q9H6D8">
    <property type="interactions" value="408"/>
</dbReference>
<dbReference type="IntAct" id="Q9H6D8">
    <property type="interactions" value="14"/>
</dbReference>
<dbReference type="STRING" id="9606.ENSP00000264703"/>
<dbReference type="GlyConnect" id="2008">
    <property type="glycosylation" value="1 N-Linked glycan (1 site)"/>
</dbReference>
<dbReference type="GlyCosmos" id="Q9H6D8">
    <property type="glycosylation" value="3 sites, 1 glycan"/>
</dbReference>
<dbReference type="GlyGen" id="Q9H6D8">
    <property type="glycosylation" value="3 sites, 1 N-linked glycan (1 site)"/>
</dbReference>
<dbReference type="iPTMnet" id="Q9H6D8"/>
<dbReference type="PhosphoSitePlus" id="Q9H6D8"/>
<dbReference type="BioMuta" id="FNDC4"/>
<dbReference type="DMDM" id="74762739"/>
<dbReference type="MassIVE" id="Q9H6D8"/>
<dbReference type="PaxDb" id="9606-ENSP00000264703"/>
<dbReference type="PeptideAtlas" id="Q9H6D8"/>
<dbReference type="Antibodypedia" id="28574">
    <property type="antibodies" value="285 antibodies from 22 providers"/>
</dbReference>
<dbReference type="DNASU" id="64838"/>
<dbReference type="Ensembl" id="ENST00000264703.4">
    <property type="protein sequence ID" value="ENSP00000264703.3"/>
    <property type="gene ID" value="ENSG00000115226.10"/>
</dbReference>
<dbReference type="GeneID" id="64838"/>
<dbReference type="KEGG" id="hsa:64838"/>
<dbReference type="MANE-Select" id="ENST00000264703.4">
    <property type="protein sequence ID" value="ENSP00000264703.3"/>
    <property type="RefSeq nucleotide sequence ID" value="NM_022823.3"/>
    <property type="RefSeq protein sequence ID" value="NP_073734.1"/>
</dbReference>
<dbReference type="UCSC" id="uc002rkx.4">
    <property type="organism name" value="human"/>
</dbReference>
<dbReference type="AGR" id="HGNC:20239"/>
<dbReference type="CTD" id="64838"/>
<dbReference type="DisGeNET" id="64838"/>
<dbReference type="GeneCards" id="FNDC4"/>
<dbReference type="HGNC" id="HGNC:20239">
    <property type="gene designation" value="FNDC4"/>
</dbReference>
<dbReference type="HPA" id="ENSG00000115226">
    <property type="expression patterns" value="Tissue enhanced (adrenal gland, liver)"/>
</dbReference>
<dbReference type="MIM" id="611905">
    <property type="type" value="gene"/>
</dbReference>
<dbReference type="neXtProt" id="NX_Q9H6D8"/>
<dbReference type="OpenTargets" id="ENSG00000115226"/>
<dbReference type="PharmGKB" id="PA134883376"/>
<dbReference type="VEuPathDB" id="HostDB:ENSG00000115226"/>
<dbReference type="eggNOG" id="ENOG502QQ99">
    <property type="taxonomic scope" value="Eukaryota"/>
</dbReference>
<dbReference type="GeneTree" id="ENSGT00390000004923"/>
<dbReference type="HOGENOM" id="CLU_089166_0_0_1"/>
<dbReference type="InParanoid" id="Q9H6D8"/>
<dbReference type="OMA" id="PMGARQK"/>
<dbReference type="OrthoDB" id="5843172at2759"/>
<dbReference type="PAN-GO" id="Q9H6D8">
    <property type="GO annotations" value="3 GO annotations based on evolutionary models"/>
</dbReference>
<dbReference type="PhylomeDB" id="Q9H6D8"/>
<dbReference type="TreeFam" id="TF325415"/>
<dbReference type="PathwayCommons" id="Q9H6D8"/>
<dbReference type="SignaLink" id="Q9H6D8"/>
<dbReference type="BioGRID-ORCS" id="64838">
    <property type="hits" value="10 hits in 1149 CRISPR screens"/>
</dbReference>
<dbReference type="GenomeRNAi" id="64838"/>
<dbReference type="Pharos" id="Q9H6D8">
    <property type="development level" value="Tbio"/>
</dbReference>
<dbReference type="PRO" id="PR:Q9H6D8"/>
<dbReference type="Proteomes" id="UP000005640">
    <property type="component" value="Chromosome 2"/>
</dbReference>
<dbReference type="RNAct" id="Q9H6D8">
    <property type="molecule type" value="protein"/>
</dbReference>
<dbReference type="Bgee" id="ENSG00000115226">
    <property type="expression patterns" value="Expressed in left adrenal gland cortex and 137 other cell types or tissues"/>
</dbReference>
<dbReference type="GO" id="GO:0005783">
    <property type="term" value="C:endoplasmic reticulum"/>
    <property type="evidence" value="ECO:0000250"/>
    <property type="project" value="UniProtKB"/>
</dbReference>
<dbReference type="GO" id="GO:0005615">
    <property type="term" value="C:extracellular space"/>
    <property type="evidence" value="ECO:0000250"/>
    <property type="project" value="UniProtKB"/>
</dbReference>
<dbReference type="GO" id="GO:0005886">
    <property type="term" value="C:plasma membrane"/>
    <property type="evidence" value="ECO:0000250"/>
    <property type="project" value="UniProtKB"/>
</dbReference>
<dbReference type="GO" id="GO:0050728">
    <property type="term" value="P:negative regulation of inflammatory response"/>
    <property type="evidence" value="ECO:0000250"/>
    <property type="project" value="UniProtKB"/>
</dbReference>
<dbReference type="GO" id="GO:0071559">
    <property type="term" value="P:response to transforming growth factor beta"/>
    <property type="evidence" value="ECO:0000270"/>
    <property type="project" value="UniProtKB"/>
</dbReference>
<dbReference type="CDD" id="cd00063">
    <property type="entry name" value="FN3"/>
    <property type="match status" value="1"/>
</dbReference>
<dbReference type="FunFam" id="2.60.40.10:FF:000117">
    <property type="entry name" value="Fibronectin type III domain containing 5"/>
    <property type="match status" value="1"/>
</dbReference>
<dbReference type="Gene3D" id="2.60.40.10">
    <property type="entry name" value="Immunoglobulins"/>
    <property type="match status" value="1"/>
</dbReference>
<dbReference type="InterPro" id="IPR003961">
    <property type="entry name" value="FN3_dom"/>
</dbReference>
<dbReference type="InterPro" id="IPR036116">
    <property type="entry name" value="FN3_sf"/>
</dbReference>
<dbReference type="InterPro" id="IPR052120">
    <property type="entry name" value="FNDC_type_III_4/5"/>
</dbReference>
<dbReference type="InterPro" id="IPR013783">
    <property type="entry name" value="Ig-like_fold"/>
</dbReference>
<dbReference type="PANTHER" id="PTHR14470">
    <property type="entry name" value="FIBRONECTIN TYPE III DOMAIN-CONTAINING PROTEIN"/>
    <property type="match status" value="1"/>
</dbReference>
<dbReference type="PANTHER" id="PTHR14470:SF2">
    <property type="entry name" value="FIBRONECTIN TYPE III DOMAIN-CONTAINING PROTEIN 4"/>
    <property type="match status" value="1"/>
</dbReference>
<dbReference type="Pfam" id="PF00041">
    <property type="entry name" value="fn3"/>
    <property type="match status" value="1"/>
</dbReference>
<dbReference type="SMART" id="SM00060">
    <property type="entry name" value="FN3"/>
    <property type="match status" value="1"/>
</dbReference>
<dbReference type="SUPFAM" id="SSF49265">
    <property type="entry name" value="Fibronectin type III"/>
    <property type="match status" value="1"/>
</dbReference>
<dbReference type="PROSITE" id="PS50853">
    <property type="entry name" value="FN3"/>
    <property type="match status" value="1"/>
</dbReference>
<gene>
    <name type="primary">FNDC4</name>
    <name type="synonym">FRCP1</name>
    <name type="ORF">UNQ6389/PRO21134</name>
</gene>